<protein>
    <recommendedName>
        <fullName evidence="1">Probable inorganic carbon transporter subunit DabA</fullName>
    </recommendedName>
</protein>
<proteinExistence type="evidence at protein level"/>
<keyword id="KW-0997">Cell inner membrane</keyword>
<keyword id="KW-1003">Cell membrane</keyword>
<keyword id="KW-0472">Membrane</keyword>
<keyword id="KW-0479">Metal-binding</keyword>
<keyword id="KW-0813">Transport</keyword>
<keyword id="KW-0862">Zinc</keyword>
<sequence>MMLHNAKASDNNELDQAKPLIPQLSDKQKEALNDACGRIAPTWPLDELIAVNPWWEMRDQHISKVSAKLSALSQAQCVMPKSYFQEVWMETLQPQHVQQAIDEMEKDYTVDNLERYLLEEDEHTHWHNVSDFVDSGRDRKYKMAWRDEITHQISQFCADFFRLKDSQGTFSKTYQGLYHEWLATTRQDKGIEILMGEDGLTEHFMDLPESSESLLAEALVGLRVPDSQIADYAHALLLDANGWASWVAYLRWQDRLSNAENDLMMDFLAIRVAWEWVLWQHQKDSDRSVFNELKVMWHHQMSILPDLIATHEAAQAKSWIWQRAAEIAYQSELQQQLKHASRTDQKVETESPPVLLQAAFCIDVRSEVIRRALEAQDSRVETLGFAGFFGLPIEYQPAGTDVSRPQLPGLLKSGIKVTPVMTKVSKGATKQALNRKARWIEWGNAPPATFSMVEATGLMYAFKLLRNSLFPESHTNPINAIPATDAFELTQNDSPLTLDQKVELAAGILHAMGLDHDLAETVMLVGHGSTSCNNPHAAGLDCGACGGQTGEINVRVLAFLLNDESVRQGLLEKDIKIPAQTRFVAAMHNTTTDEFTCFGLNHVDETIQKWLARATEFARQERSTRLGLNHLEGQNLHQSIQRRAKDWSQVRPEWGLSNNAAFIVAPRARTRGVDFQGRAFLHDYDWQQDADNSLLTLIMTAPMVVTNWINLQYYASVCDNHVYGSGNKVLHNVVDGCIGVFEGNGGDLRIGLPMQSLHNGEKWMHEPLRLSVYIDAPQKTIAQVVAENDVVRHLIDNEWLYCFSWAPDGRIHRYFNNQWLESA</sequence>
<dbReference type="EMBL" id="CP000109">
    <property type="protein sequence ID" value="ABB41450.1"/>
    <property type="molecule type" value="Genomic_DNA"/>
</dbReference>
<dbReference type="STRING" id="317025.Tcr_0854"/>
<dbReference type="TCDB" id="9.A.2.1.1">
    <property type="family name" value="the putative dissolved inorganic carbon concentrating transporter (dic-ct) family"/>
</dbReference>
<dbReference type="KEGG" id="tcx:Tcr_0854"/>
<dbReference type="eggNOG" id="COG3002">
    <property type="taxonomic scope" value="Bacteria"/>
</dbReference>
<dbReference type="HOGENOM" id="CLU_009885_1_0_6"/>
<dbReference type="OrthoDB" id="9805101at2"/>
<dbReference type="GO" id="GO:0005886">
    <property type="term" value="C:plasma membrane"/>
    <property type="evidence" value="ECO:0007669"/>
    <property type="project" value="UniProtKB-SubCell"/>
</dbReference>
<dbReference type="GO" id="GO:0008270">
    <property type="term" value="F:zinc ion binding"/>
    <property type="evidence" value="ECO:0007669"/>
    <property type="project" value="UniProtKB-UniRule"/>
</dbReference>
<dbReference type="HAMAP" id="MF_01871">
    <property type="entry name" value="DabA"/>
    <property type="match status" value="1"/>
</dbReference>
<dbReference type="InterPro" id="IPR018752">
    <property type="entry name" value="DabA"/>
</dbReference>
<dbReference type="PANTHER" id="PTHR38344:SF1">
    <property type="entry name" value="INORGANIC CARBON TRANSPORTER SUBUNIT DABA-RELATED"/>
    <property type="match status" value="1"/>
</dbReference>
<dbReference type="PANTHER" id="PTHR38344">
    <property type="entry name" value="UPF0753 PROTEIN AQ_863"/>
    <property type="match status" value="1"/>
</dbReference>
<dbReference type="Pfam" id="PF10070">
    <property type="entry name" value="DabA"/>
    <property type="match status" value="1"/>
</dbReference>
<comment type="function">
    <text evidence="1">Part of an energy-coupled inorganic carbon pump.</text>
</comment>
<comment type="function">
    <text evidence="4">Probably involved in transport of dissolved inorganic carbon (DIC) with upstream gene dabB (Tcr_0853); has been suggested to be a proton-DIC symporter.</text>
</comment>
<comment type="cofactor">
    <cofactor evidence="1">
        <name>Zn(2+)</name>
        <dbReference type="ChEBI" id="CHEBI:29105"/>
    </cofactor>
</comment>
<comment type="activity regulation">
    <text evidence="2">Intracellular DIC accumulation is sensitive to CCCP (carbonyl cyanide-m-chlorophenylhydrazone) and DCCD (N,N-dicyclohexylcarbodiimide) and therefore likely driven by either proton potential, ATP, or both.</text>
</comment>
<comment type="subunit">
    <text evidence="1">Forms a complex with DabB.</text>
</comment>
<comment type="subcellular location">
    <subcellularLocation>
        <location evidence="1">Cell inner membrane</location>
        <topology evidence="1">Peripheral membrane protein</topology>
    </subcellularLocation>
</comment>
<comment type="induction">
    <text evidence="3">Induced by growth in low levels of dissolved inorganic carbon (DIC) (at protein level).</text>
</comment>
<comment type="disruption phenotype">
    <text evidence="3">Cells do not grow in low DIC levels, increased carboxysome content. Decreased ability to accumulate and fix DIC under DIC-limiting conditions.</text>
</comment>
<comment type="similarity">
    <text evidence="1">Belongs to the inorganic carbon transporter (TC 9.A.2) DabA family.</text>
</comment>
<accession>Q31HC3</accession>
<feature type="chain" id="PRO_0000387322" description="Probable inorganic carbon transporter subunit DabA">
    <location>
        <begin position="1"/>
        <end position="823"/>
    </location>
</feature>
<feature type="binding site" evidence="1">
    <location>
        <position position="361"/>
    </location>
    <ligand>
        <name>Zn(2+)</name>
        <dbReference type="ChEBI" id="CHEBI:29105"/>
    </ligand>
</feature>
<feature type="binding site" evidence="1">
    <location>
        <position position="363"/>
    </location>
    <ligand>
        <name>Zn(2+)</name>
        <dbReference type="ChEBI" id="CHEBI:29105"/>
    </ligand>
</feature>
<feature type="binding site" evidence="1">
    <location>
        <position position="527"/>
    </location>
    <ligand>
        <name>Zn(2+)</name>
        <dbReference type="ChEBI" id="CHEBI:29105"/>
    </ligand>
</feature>
<feature type="binding site" evidence="1">
    <location>
        <position position="542"/>
    </location>
    <ligand>
        <name>Zn(2+)</name>
        <dbReference type="ChEBI" id="CHEBI:29105"/>
    </ligand>
</feature>
<evidence type="ECO:0000255" key="1">
    <source>
        <dbReference type="HAMAP-Rule" id="MF_01871"/>
    </source>
</evidence>
<evidence type="ECO:0000269" key="2">
    <source>
    </source>
</evidence>
<evidence type="ECO:0000269" key="3">
    <source>
    </source>
</evidence>
<evidence type="ECO:0000305" key="4">
    <source>
    </source>
</evidence>
<name>DABA_HYDCU</name>
<reference key="1">
    <citation type="journal article" date="2006" name="PLoS Biol.">
        <title>The genome of deep-sea vent chemolithoautotroph Thiomicrospira crunogena XCL-2.</title>
        <authorList>
            <person name="Scott K.M."/>
            <person name="Sievert S.M."/>
            <person name="Abril F.N."/>
            <person name="Ball L.A."/>
            <person name="Barrett C.J."/>
            <person name="Blake R.A."/>
            <person name="Boller A.J."/>
            <person name="Chain P.S.G."/>
            <person name="Clark J.A."/>
            <person name="Davis C.R."/>
            <person name="Detter C."/>
            <person name="Do K.F."/>
            <person name="Dobrinski K.P."/>
            <person name="Faza B.I."/>
            <person name="Fitzpatrick K.A."/>
            <person name="Freyermuth S.K."/>
            <person name="Harmer T.L."/>
            <person name="Hauser L.J."/>
            <person name="Huegler M."/>
            <person name="Kerfeld C.A."/>
            <person name="Klotz M.G."/>
            <person name="Kong W.W."/>
            <person name="Land M."/>
            <person name="Lapidus A."/>
            <person name="Larimer F.W."/>
            <person name="Longo D.L."/>
            <person name="Lucas S."/>
            <person name="Malfatti S.A."/>
            <person name="Massey S.E."/>
            <person name="Martin D.D."/>
            <person name="McCuddin Z."/>
            <person name="Meyer F."/>
            <person name="Moore J.L."/>
            <person name="Ocampo L.H. Jr."/>
            <person name="Paul J.H."/>
            <person name="Paulsen I.T."/>
            <person name="Reep D.K."/>
            <person name="Ren Q."/>
            <person name="Ross R.L."/>
            <person name="Sato P.Y."/>
            <person name="Thomas P."/>
            <person name="Tinkham L.E."/>
            <person name="Zeruth G.T."/>
        </authorList>
    </citation>
    <scope>NUCLEOTIDE SEQUENCE [LARGE SCALE GENOMIC DNA]</scope>
    <source>
        <strain>DSM 25203 / XCL-2</strain>
    </source>
</reference>
<reference key="2">
    <citation type="journal article" date="2016" name="Arch. Microbiol.">
        <title>Dissolved inorganic carbon uptake in Thiomicrospira crunogena XCL-2 is Deltap- and ATP-sensitive and enhances RubisCO-mediated carbon fixation.</title>
        <authorList>
            <consortium name="USF MCB4404L 2012"/>
            <person name="Menning K.J."/>
            <person name="Menon B.B."/>
            <person name="Fox G."/>
            <person name="Scott K.M."/>
        </authorList>
    </citation>
    <scope>ACTIVITY REGULATION</scope>
    <source>
        <strain>DSM 25203 / XCL-2</strain>
    </source>
</reference>
<reference key="3">
    <citation type="journal article" date="2017" name="J. Bacteriol.">
        <title>Proteomic and Mutant Analysis of the CO2 Concentrating Mechanism of Hydrothermal Vent Chemolithoautotroph Thiomicrospira crunogena.</title>
        <authorList>
            <consortium name="USF MCB4404L"/>
            <person name="Mangiapia M."/>
            <person name="Brown T.W."/>
            <person name="Chaput D."/>
            <person name="Haller E."/>
            <person name="Harmer T.L."/>
            <person name="Hashemy Z."/>
            <person name="Keeley R."/>
            <person name="Leonard J."/>
            <person name="Mancera P."/>
            <person name="Nicholson D."/>
            <person name="Stevens S."/>
            <person name="Wanjugi P."/>
            <person name="Zabinski T."/>
            <person name="Pan C."/>
            <person name="Scott K.M."/>
        </authorList>
    </citation>
    <scope>FUNCTION</scope>
    <scope>INDUCTION</scope>
    <scope>DISRUPTION PHENOTYPE</scope>
    <source>
        <strain>DSM 25203 / XCL-2</strain>
    </source>
</reference>
<gene>
    <name evidence="1" type="primary">dabA</name>
    <name type="ordered locus">Tcr_0854</name>
</gene>
<organism>
    <name type="scientific">Hydrogenovibrio crunogenus (strain DSM 25203 / XCL-2)</name>
    <name type="common">Thiomicrospira crunogena</name>
    <dbReference type="NCBI Taxonomy" id="317025"/>
    <lineage>
        <taxon>Bacteria</taxon>
        <taxon>Pseudomonadati</taxon>
        <taxon>Pseudomonadota</taxon>
        <taxon>Gammaproteobacteria</taxon>
        <taxon>Thiotrichales</taxon>
        <taxon>Piscirickettsiaceae</taxon>
        <taxon>Hydrogenovibrio</taxon>
    </lineage>
</organism>